<protein>
    <recommendedName>
        <fullName evidence="1">Cytochrome b559 subunit alpha</fullName>
    </recommendedName>
    <alternativeName>
        <fullName evidence="1">PSII reaction center subunit V</fullName>
    </alternativeName>
</protein>
<sequence length="83" mass="9174">MAAGSTGERPFFEIITSIRYWVIHAVTLPAIFLAGFLFVSTGLAYDAFGTPRPDSYFQAADVKAPVVSQRYEGKSQLDTRLKN</sequence>
<dbReference type="EMBL" id="CT978603">
    <property type="protein sequence ID" value="CAK27113.1"/>
    <property type="molecule type" value="Genomic_DNA"/>
</dbReference>
<dbReference type="SMR" id="A5GQF4"/>
<dbReference type="STRING" id="316278.SynRCC307_0210"/>
<dbReference type="KEGG" id="syr:SynRCC307_0210"/>
<dbReference type="eggNOG" id="ENOG5032GCS">
    <property type="taxonomic scope" value="Bacteria"/>
</dbReference>
<dbReference type="HOGENOM" id="CLU_194095_0_0_3"/>
<dbReference type="OrthoDB" id="514620at2"/>
<dbReference type="Proteomes" id="UP000001115">
    <property type="component" value="Chromosome"/>
</dbReference>
<dbReference type="GO" id="GO:0009523">
    <property type="term" value="C:photosystem II"/>
    <property type="evidence" value="ECO:0007669"/>
    <property type="project" value="UniProtKB-KW"/>
</dbReference>
<dbReference type="GO" id="GO:0031676">
    <property type="term" value="C:plasma membrane-derived thylakoid membrane"/>
    <property type="evidence" value="ECO:0007669"/>
    <property type="project" value="UniProtKB-SubCell"/>
</dbReference>
<dbReference type="GO" id="GO:0009055">
    <property type="term" value="F:electron transfer activity"/>
    <property type="evidence" value="ECO:0007669"/>
    <property type="project" value="UniProtKB-UniRule"/>
</dbReference>
<dbReference type="GO" id="GO:0020037">
    <property type="term" value="F:heme binding"/>
    <property type="evidence" value="ECO:0007669"/>
    <property type="project" value="InterPro"/>
</dbReference>
<dbReference type="GO" id="GO:0005506">
    <property type="term" value="F:iron ion binding"/>
    <property type="evidence" value="ECO:0007669"/>
    <property type="project" value="UniProtKB-UniRule"/>
</dbReference>
<dbReference type="GO" id="GO:0009767">
    <property type="term" value="P:photosynthetic electron transport chain"/>
    <property type="evidence" value="ECO:0007669"/>
    <property type="project" value="InterPro"/>
</dbReference>
<dbReference type="Gene3D" id="1.20.5.860">
    <property type="entry name" value="Photosystem II cytochrome b559, alpha subunit"/>
    <property type="match status" value="1"/>
</dbReference>
<dbReference type="HAMAP" id="MF_00642">
    <property type="entry name" value="PSII_PsbE"/>
    <property type="match status" value="1"/>
</dbReference>
<dbReference type="InterPro" id="IPR006217">
    <property type="entry name" value="PSII_cyt_b559_asu"/>
</dbReference>
<dbReference type="InterPro" id="IPR037025">
    <property type="entry name" value="PSII_cyt_b559_asu_sf"/>
</dbReference>
<dbReference type="InterPro" id="IPR013081">
    <property type="entry name" value="PSII_cyt_b559_N"/>
</dbReference>
<dbReference type="InterPro" id="IPR013082">
    <property type="entry name" value="PSII_cytb559_asu_lum"/>
</dbReference>
<dbReference type="NCBIfam" id="TIGR01332">
    <property type="entry name" value="cyt_b559_alpha"/>
    <property type="match status" value="1"/>
</dbReference>
<dbReference type="PANTHER" id="PTHR33391">
    <property type="entry name" value="CYTOCHROME B559 SUBUNIT BETA-RELATED"/>
    <property type="match status" value="1"/>
</dbReference>
<dbReference type="PANTHER" id="PTHR33391:SF9">
    <property type="entry name" value="CYTOCHROME B559 SUBUNIT BETA-RELATED"/>
    <property type="match status" value="1"/>
</dbReference>
<dbReference type="Pfam" id="PF00283">
    <property type="entry name" value="Cytochrom_B559"/>
    <property type="match status" value="1"/>
</dbReference>
<dbReference type="Pfam" id="PF00284">
    <property type="entry name" value="Cytochrom_B559a"/>
    <property type="match status" value="1"/>
</dbReference>
<dbReference type="PIRSF" id="PIRSF000036">
    <property type="entry name" value="PsbE"/>
    <property type="match status" value="1"/>
</dbReference>
<dbReference type="SUPFAM" id="SSF161045">
    <property type="entry name" value="Cytochrome b559 subunits"/>
    <property type="match status" value="1"/>
</dbReference>
<evidence type="ECO:0000255" key="1">
    <source>
        <dbReference type="HAMAP-Rule" id="MF_00642"/>
    </source>
</evidence>
<gene>
    <name evidence="1" type="primary">psbE</name>
    <name type="ordered locus">SynRCC307_0210</name>
</gene>
<accession>A5GQF4</accession>
<proteinExistence type="inferred from homology"/>
<feature type="chain" id="PRO_1000056933" description="Cytochrome b559 subunit alpha">
    <location>
        <begin position="1"/>
        <end position="83"/>
    </location>
</feature>
<feature type="transmembrane region" description="Helical" evidence="1">
    <location>
        <begin position="22"/>
        <end position="36"/>
    </location>
</feature>
<feature type="binding site" description="axial binding residue" evidence="1">
    <location>
        <position position="24"/>
    </location>
    <ligand>
        <name>heme</name>
        <dbReference type="ChEBI" id="CHEBI:30413"/>
        <note>ligand shared with beta subunit</note>
    </ligand>
    <ligandPart>
        <name>Fe</name>
        <dbReference type="ChEBI" id="CHEBI:18248"/>
    </ligandPart>
</feature>
<name>PSBE_SYNR3</name>
<keyword id="KW-0249">Electron transport</keyword>
<keyword id="KW-0349">Heme</keyword>
<keyword id="KW-0408">Iron</keyword>
<keyword id="KW-0472">Membrane</keyword>
<keyword id="KW-0479">Metal-binding</keyword>
<keyword id="KW-0602">Photosynthesis</keyword>
<keyword id="KW-0604">Photosystem II</keyword>
<keyword id="KW-1185">Reference proteome</keyword>
<keyword id="KW-0793">Thylakoid</keyword>
<keyword id="KW-0812">Transmembrane</keyword>
<keyword id="KW-1133">Transmembrane helix</keyword>
<keyword id="KW-0813">Transport</keyword>
<organism>
    <name type="scientific">Synechococcus sp. (strain RCC307)</name>
    <dbReference type="NCBI Taxonomy" id="316278"/>
    <lineage>
        <taxon>Bacteria</taxon>
        <taxon>Bacillati</taxon>
        <taxon>Cyanobacteriota</taxon>
        <taxon>Cyanophyceae</taxon>
        <taxon>Synechococcales</taxon>
        <taxon>Synechococcaceae</taxon>
        <taxon>Synechococcus</taxon>
    </lineage>
</organism>
<comment type="function">
    <text evidence="1">This b-type cytochrome is tightly associated with the reaction center of photosystem II (PSII). PSII is a light-driven water:plastoquinone oxidoreductase that uses light energy to abstract electrons from H(2)O, generating O(2) and a proton gradient subsequently used for ATP formation. It consists of a core antenna complex that captures photons, and an electron transfer chain that converts photonic excitation into a charge separation.</text>
</comment>
<comment type="cofactor">
    <cofactor evidence="1">
        <name>heme b</name>
        <dbReference type="ChEBI" id="CHEBI:60344"/>
    </cofactor>
    <text evidence="1">With its partner (PsbF) binds heme. PSII binds additional chlorophylls, carotenoids and specific lipids.</text>
</comment>
<comment type="subunit">
    <text evidence="1">Heterodimer of an alpha subunit and a beta subunit. PSII is composed of 1 copy each of membrane proteins PsbA, PsbB, PsbC, PsbD, PsbE, PsbF, PsbH, PsbI, PsbJ, PsbK, PsbL, PsbM, PsbT, PsbX, PsbY, PsbZ, Psb30/Ycf12, peripheral proteins PsbO, CyanoQ (PsbQ), PsbU, PsbV and a large number of cofactors. It forms dimeric complexes.</text>
</comment>
<comment type="subcellular location">
    <subcellularLocation>
        <location evidence="1">Cellular thylakoid membrane</location>
        <topology evidence="1">Single-pass membrane protein</topology>
    </subcellularLocation>
</comment>
<comment type="similarity">
    <text evidence="1">Belongs to the PsbE/PsbF family.</text>
</comment>
<reference key="1">
    <citation type="submission" date="2006-05" db="EMBL/GenBank/DDBJ databases">
        <authorList>
            <consortium name="Genoscope"/>
        </authorList>
    </citation>
    <scope>NUCLEOTIDE SEQUENCE [LARGE SCALE GENOMIC DNA]</scope>
    <source>
        <strain>RCC307</strain>
    </source>
</reference>